<name>DNAJ_CLOBB</name>
<accession>B2TLZ8</accession>
<feature type="chain" id="PRO_1000164251" description="Chaperone protein DnaJ">
    <location>
        <begin position="1"/>
        <end position="373"/>
    </location>
</feature>
<feature type="domain" description="J" evidence="1">
    <location>
        <begin position="5"/>
        <end position="70"/>
    </location>
</feature>
<feature type="repeat" description="CXXCXGXG motif">
    <location>
        <begin position="145"/>
        <end position="152"/>
    </location>
</feature>
<feature type="repeat" description="CXXCXGXG motif">
    <location>
        <begin position="162"/>
        <end position="169"/>
    </location>
</feature>
<feature type="repeat" description="CXXCXGXG motif">
    <location>
        <begin position="188"/>
        <end position="195"/>
    </location>
</feature>
<feature type="repeat" description="CXXCXGXG motif">
    <location>
        <begin position="202"/>
        <end position="209"/>
    </location>
</feature>
<feature type="zinc finger region" description="CR-type" evidence="1">
    <location>
        <begin position="132"/>
        <end position="214"/>
    </location>
</feature>
<feature type="binding site" evidence="1">
    <location>
        <position position="145"/>
    </location>
    <ligand>
        <name>Zn(2+)</name>
        <dbReference type="ChEBI" id="CHEBI:29105"/>
        <label>1</label>
    </ligand>
</feature>
<feature type="binding site" evidence="1">
    <location>
        <position position="148"/>
    </location>
    <ligand>
        <name>Zn(2+)</name>
        <dbReference type="ChEBI" id="CHEBI:29105"/>
        <label>1</label>
    </ligand>
</feature>
<feature type="binding site" evidence="1">
    <location>
        <position position="162"/>
    </location>
    <ligand>
        <name>Zn(2+)</name>
        <dbReference type="ChEBI" id="CHEBI:29105"/>
        <label>2</label>
    </ligand>
</feature>
<feature type="binding site" evidence="1">
    <location>
        <position position="165"/>
    </location>
    <ligand>
        <name>Zn(2+)</name>
        <dbReference type="ChEBI" id="CHEBI:29105"/>
        <label>2</label>
    </ligand>
</feature>
<feature type="binding site" evidence="1">
    <location>
        <position position="188"/>
    </location>
    <ligand>
        <name>Zn(2+)</name>
        <dbReference type="ChEBI" id="CHEBI:29105"/>
        <label>2</label>
    </ligand>
</feature>
<feature type="binding site" evidence="1">
    <location>
        <position position="191"/>
    </location>
    <ligand>
        <name>Zn(2+)</name>
        <dbReference type="ChEBI" id="CHEBI:29105"/>
        <label>2</label>
    </ligand>
</feature>
<feature type="binding site" evidence="1">
    <location>
        <position position="202"/>
    </location>
    <ligand>
        <name>Zn(2+)</name>
        <dbReference type="ChEBI" id="CHEBI:29105"/>
        <label>1</label>
    </ligand>
</feature>
<feature type="binding site" evidence="1">
    <location>
        <position position="205"/>
    </location>
    <ligand>
        <name>Zn(2+)</name>
        <dbReference type="ChEBI" id="CHEBI:29105"/>
        <label>1</label>
    </ligand>
</feature>
<gene>
    <name evidence="1" type="primary">dnaJ</name>
    <name type="ordered locus">CLL_A0892</name>
</gene>
<organism>
    <name type="scientific">Clostridium botulinum (strain Eklund 17B / Type B)</name>
    <dbReference type="NCBI Taxonomy" id="935198"/>
    <lineage>
        <taxon>Bacteria</taxon>
        <taxon>Bacillati</taxon>
        <taxon>Bacillota</taxon>
        <taxon>Clostridia</taxon>
        <taxon>Eubacteriales</taxon>
        <taxon>Clostridiaceae</taxon>
        <taxon>Clostridium</taxon>
    </lineage>
</organism>
<sequence length="373" mass="40507">MANKDYYEVLGLQKGASDDEIKKAFRKLAIKYHPDKNKGNTEAEEKFKEINEAYQVLSDPEKKSNYDQFGSADFNGGGFGSGGFGGFDMGGFGDIFDMFTGGGSSTRRRNGPVNGNDIEYTVTLTFEEAVFGVEKEITVNRSESCEHCNGSGAEPGTSKKTCPTCSGTGQVRVQRQTPLGSFVSTSTCDRCSGTGNIIEKPCTHCRGNGNVRKTRKINVNIPAGVDTGNVMPLRGQGEHGLRGGSPGDLYIRINVSPSKEFTRKGNDIYIDTHISMAKAALGTEITVKTVEGNVKYTVPEGTQSGTLFRLKGKGVARVNSTGKGDQYVRVIVDIPKGLNQKQKEALYTFMEACGEEMDENTHSFKKNLFGRKK</sequence>
<comment type="function">
    <text evidence="1">Participates actively in the response to hyperosmotic and heat shock by preventing the aggregation of stress-denatured proteins and by disaggregating proteins, also in an autonomous, DnaK-independent fashion. Unfolded proteins bind initially to DnaJ; upon interaction with the DnaJ-bound protein, DnaK hydrolyzes its bound ATP, resulting in the formation of a stable complex. GrpE releases ADP from DnaK; ATP binding to DnaK triggers the release of the substrate protein, thus completing the reaction cycle. Several rounds of ATP-dependent interactions between DnaJ, DnaK and GrpE are required for fully efficient folding. Also involved, together with DnaK and GrpE, in the DNA replication of plasmids through activation of initiation proteins.</text>
</comment>
<comment type="cofactor">
    <cofactor evidence="1">
        <name>Zn(2+)</name>
        <dbReference type="ChEBI" id="CHEBI:29105"/>
    </cofactor>
    <text evidence="1">Binds 2 Zn(2+) ions per monomer.</text>
</comment>
<comment type="subunit">
    <text evidence="1">Homodimer.</text>
</comment>
<comment type="subcellular location">
    <subcellularLocation>
        <location evidence="1">Cytoplasm</location>
    </subcellularLocation>
</comment>
<comment type="domain">
    <text evidence="1">The J domain is necessary and sufficient to stimulate DnaK ATPase activity. Zinc center 1 plays an important role in the autonomous, DnaK-independent chaperone activity of DnaJ. Zinc center 2 is essential for interaction with DnaK and for DnaJ activity.</text>
</comment>
<comment type="similarity">
    <text evidence="1">Belongs to the DnaJ family.</text>
</comment>
<reference key="1">
    <citation type="submission" date="2008-04" db="EMBL/GenBank/DDBJ databases">
        <title>Complete sequence of Clostridium botulinum strain Eklund.</title>
        <authorList>
            <person name="Brinkac L.M."/>
            <person name="Brown J.L."/>
            <person name="Bruce D."/>
            <person name="Detter C."/>
            <person name="Munk C."/>
            <person name="Smith L.A."/>
            <person name="Smith T.J."/>
            <person name="Sutton G."/>
            <person name="Brettin T.S."/>
        </authorList>
    </citation>
    <scope>NUCLEOTIDE SEQUENCE [LARGE SCALE GENOMIC DNA]</scope>
    <source>
        <strain>Eklund 17B / Type B</strain>
    </source>
</reference>
<proteinExistence type="inferred from homology"/>
<dbReference type="EMBL" id="CP001056">
    <property type="protein sequence ID" value="ACD22934.1"/>
    <property type="molecule type" value="Genomic_DNA"/>
</dbReference>
<dbReference type="SMR" id="B2TLZ8"/>
<dbReference type="KEGG" id="cbk:CLL_A0892"/>
<dbReference type="PATRIC" id="fig|935198.13.peg.842"/>
<dbReference type="HOGENOM" id="CLU_017633_0_7_9"/>
<dbReference type="Proteomes" id="UP000001195">
    <property type="component" value="Chromosome"/>
</dbReference>
<dbReference type="GO" id="GO:0005737">
    <property type="term" value="C:cytoplasm"/>
    <property type="evidence" value="ECO:0007669"/>
    <property type="project" value="UniProtKB-SubCell"/>
</dbReference>
<dbReference type="GO" id="GO:0005524">
    <property type="term" value="F:ATP binding"/>
    <property type="evidence" value="ECO:0007669"/>
    <property type="project" value="InterPro"/>
</dbReference>
<dbReference type="GO" id="GO:0031072">
    <property type="term" value="F:heat shock protein binding"/>
    <property type="evidence" value="ECO:0007669"/>
    <property type="project" value="InterPro"/>
</dbReference>
<dbReference type="GO" id="GO:0051082">
    <property type="term" value="F:unfolded protein binding"/>
    <property type="evidence" value="ECO:0007669"/>
    <property type="project" value="UniProtKB-UniRule"/>
</dbReference>
<dbReference type="GO" id="GO:0008270">
    <property type="term" value="F:zinc ion binding"/>
    <property type="evidence" value="ECO:0007669"/>
    <property type="project" value="UniProtKB-UniRule"/>
</dbReference>
<dbReference type="GO" id="GO:0051085">
    <property type="term" value="P:chaperone cofactor-dependent protein refolding"/>
    <property type="evidence" value="ECO:0007669"/>
    <property type="project" value="TreeGrafter"/>
</dbReference>
<dbReference type="GO" id="GO:0006260">
    <property type="term" value="P:DNA replication"/>
    <property type="evidence" value="ECO:0007669"/>
    <property type="project" value="UniProtKB-KW"/>
</dbReference>
<dbReference type="GO" id="GO:0042026">
    <property type="term" value="P:protein refolding"/>
    <property type="evidence" value="ECO:0007669"/>
    <property type="project" value="TreeGrafter"/>
</dbReference>
<dbReference type="GO" id="GO:0009408">
    <property type="term" value="P:response to heat"/>
    <property type="evidence" value="ECO:0007669"/>
    <property type="project" value="InterPro"/>
</dbReference>
<dbReference type="CDD" id="cd06257">
    <property type="entry name" value="DnaJ"/>
    <property type="match status" value="1"/>
</dbReference>
<dbReference type="CDD" id="cd10747">
    <property type="entry name" value="DnaJ_C"/>
    <property type="match status" value="1"/>
</dbReference>
<dbReference type="CDD" id="cd10719">
    <property type="entry name" value="DnaJ_zf"/>
    <property type="match status" value="1"/>
</dbReference>
<dbReference type="FunFam" id="1.10.287.110:FF:000031">
    <property type="entry name" value="Molecular chaperone DnaJ"/>
    <property type="match status" value="1"/>
</dbReference>
<dbReference type="FunFam" id="2.10.230.10:FF:000002">
    <property type="entry name" value="Molecular chaperone DnaJ"/>
    <property type="match status" value="1"/>
</dbReference>
<dbReference type="FunFam" id="2.60.260.20:FF:000004">
    <property type="entry name" value="Molecular chaperone DnaJ"/>
    <property type="match status" value="1"/>
</dbReference>
<dbReference type="Gene3D" id="1.10.287.110">
    <property type="entry name" value="DnaJ domain"/>
    <property type="match status" value="1"/>
</dbReference>
<dbReference type="Gene3D" id="2.10.230.10">
    <property type="entry name" value="Heat shock protein DnaJ, cysteine-rich domain"/>
    <property type="match status" value="1"/>
</dbReference>
<dbReference type="Gene3D" id="2.60.260.20">
    <property type="entry name" value="Urease metallochaperone UreE, N-terminal domain"/>
    <property type="match status" value="2"/>
</dbReference>
<dbReference type="HAMAP" id="MF_01152">
    <property type="entry name" value="DnaJ"/>
    <property type="match status" value="1"/>
</dbReference>
<dbReference type="InterPro" id="IPR012724">
    <property type="entry name" value="DnaJ"/>
</dbReference>
<dbReference type="InterPro" id="IPR002939">
    <property type="entry name" value="DnaJ_C"/>
</dbReference>
<dbReference type="InterPro" id="IPR001623">
    <property type="entry name" value="DnaJ_domain"/>
</dbReference>
<dbReference type="InterPro" id="IPR018253">
    <property type="entry name" value="DnaJ_domain_CS"/>
</dbReference>
<dbReference type="InterPro" id="IPR008971">
    <property type="entry name" value="HSP40/DnaJ_pept-bd"/>
</dbReference>
<dbReference type="InterPro" id="IPR001305">
    <property type="entry name" value="HSP_DnaJ_Cys-rich_dom"/>
</dbReference>
<dbReference type="InterPro" id="IPR036410">
    <property type="entry name" value="HSP_DnaJ_Cys-rich_dom_sf"/>
</dbReference>
<dbReference type="InterPro" id="IPR036869">
    <property type="entry name" value="J_dom_sf"/>
</dbReference>
<dbReference type="NCBIfam" id="TIGR02349">
    <property type="entry name" value="DnaJ_bact"/>
    <property type="match status" value="1"/>
</dbReference>
<dbReference type="NCBIfam" id="NF008035">
    <property type="entry name" value="PRK10767.1"/>
    <property type="match status" value="1"/>
</dbReference>
<dbReference type="NCBIfam" id="NF010890">
    <property type="entry name" value="PRK14297.1"/>
    <property type="match status" value="1"/>
</dbReference>
<dbReference type="PANTHER" id="PTHR43096:SF48">
    <property type="entry name" value="CHAPERONE PROTEIN DNAJ"/>
    <property type="match status" value="1"/>
</dbReference>
<dbReference type="PANTHER" id="PTHR43096">
    <property type="entry name" value="DNAJ HOMOLOG 1, MITOCHONDRIAL-RELATED"/>
    <property type="match status" value="1"/>
</dbReference>
<dbReference type="Pfam" id="PF00226">
    <property type="entry name" value="DnaJ"/>
    <property type="match status" value="1"/>
</dbReference>
<dbReference type="Pfam" id="PF01556">
    <property type="entry name" value="DnaJ_C"/>
    <property type="match status" value="1"/>
</dbReference>
<dbReference type="Pfam" id="PF00684">
    <property type="entry name" value="DnaJ_CXXCXGXG"/>
    <property type="match status" value="1"/>
</dbReference>
<dbReference type="PRINTS" id="PR00625">
    <property type="entry name" value="JDOMAIN"/>
</dbReference>
<dbReference type="SMART" id="SM00271">
    <property type="entry name" value="DnaJ"/>
    <property type="match status" value="1"/>
</dbReference>
<dbReference type="SUPFAM" id="SSF46565">
    <property type="entry name" value="Chaperone J-domain"/>
    <property type="match status" value="1"/>
</dbReference>
<dbReference type="SUPFAM" id="SSF57938">
    <property type="entry name" value="DnaJ/Hsp40 cysteine-rich domain"/>
    <property type="match status" value="1"/>
</dbReference>
<dbReference type="SUPFAM" id="SSF49493">
    <property type="entry name" value="HSP40/DnaJ peptide-binding domain"/>
    <property type="match status" value="2"/>
</dbReference>
<dbReference type="PROSITE" id="PS00636">
    <property type="entry name" value="DNAJ_1"/>
    <property type="match status" value="1"/>
</dbReference>
<dbReference type="PROSITE" id="PS50076">
    <property type="entry name" value="DNAJ_2"/>
    <property type="match status" value="1"/>
</dbReference>
<dbReference type="PROSITE" id="PS51188">
    <property type="entry name" value="ZF_CR"/>
    <property type="match status" value="1"/>
</dbReference>
<evidence type="ECO:0000255" key="1">
    <source>
        <dbReference type="HAMAP-Rule" id="MF_01152"/>
    </source>
</evidence>
<protein>
    <recommendedName>
        <fullName evidence="1">Chaperone protein DnaJ</fullName>
    </recommendedName>
</protein>
<keyword id="KW-0143">Chaperone</keyword>
<keyword id="KW-0963">Cytoplasm</keyword>
<keyword id="KW-0235">DNA replication</keyword>
<keyword id="KW-0479">Metal-binding</keyword>
<keyword id="KW-0677">Repeat</keyword>
<keyword id="KW-0346">Stress response</keyword>
<keyword id="KW-0862">Zinc</keyword>
<keyword id="KW-0863">Zinc-finger</keyword>